<evidence type="ECO:0000255" key="1">
    <source>
        <dbReference type="HAMAP-Rule" id="MF_00822"/>
    </source>
</evidence>
<gene>
    <name evidence="1" type="primary">ureE</name>
    <name type="ordered locus">Mmwyl1_0957</name>
</gene>
<organism>
    <name type="scientific">Marinomonas sp. (strain MWYL1)</name>
    <dbReference type="NCBI Taxonomy" id="400668"/>
    <lineage>
        <taxon>Bacteria</taxon>
        <taxon>Pseudomonadati</taxon>
        <taxon>Pseudomonadota</taxon>
        <taxon>Gammaproteobacteria</taxon>
        <taxon>Oceanospirillales</taxon>
        <taxon>Oceanospirillaceae</taxon>
        <taxon>Marinomonas</taxon>
    </lineage>
</organism>
<feature type="chain" id="PRO_1000083896" description="Urease accessory protein UreE">
    <location>
        <begin position="1"/>
        <end position="147"/>
    </location>
</feature>
<dbReference type="EMBL" id="CP000749">
    <property type="protein sequence ID" value="ABR69888.1"/>
    <property type="molecule type" value="Genomic_DNA"/>
</dbReference>
<dbReference type="SMR" id="A6VTV9"/>
<dbReference type="STRING" id="400668.Mmwyl1_0957"/>
<dbReference type="KEGG" id="mmw:Mmwyl1_0957"/>
<dbReference type="eggNOG" id="COG2371">
    <property type="taxonomic scope" value="Bacteria"/>
</dbReference>
<dbReference type="HOGENOM" id="CLU_093757_2_0_6"/>
<dbReference type="OrthoDB" id="5421304at2"/>
<dbReference type="GO" id="GO:0005737">
    <property type="term" value="C:cytoplasm"/>
    <property type="evidence" value="ECO:0007669"/>
    <property type="project" value="UniProtKB-SubCell"/>
</dbReference>
<dbReference type="GO" id="GO:0016151">
    <property type="term" value="F:nickel cation binding"/>
    <property type="evidence" value="ECO:0007669"/>
    <property type="project" value="UniProtKB-UniRule"/>
</dbReference>
<dbReference type="GO" id="GO:0051082">
    <property type="term" value="F:unfolded protein binding"/>
    <property type="evidence" value="ECO:0007669"/>
    <property type="project" value="UniProtKB-UniRule"/>
</dbReference>
<dbReference type="GO" id="GO:0006457">
    <property type="term" value="P:protein folding"/>
    <property type="evidence" value="ECO:0007669"/>
    <property type="project" value="InterPro"/>
</dbReference>
<dbReference type="GO" id="GO:0065003">
    <property type="term" value="P:protein-containing complex assembly"/>
    <property type="evidence" value="ECO:0007669"/>
    <property type="project" value="InterPro"/>
</dbReference>
<dbReference type="GO" id="GO:0019627">
    <property type="term" value="P:urea metabolic process"/>
    <property type="evidence" value="ECO:0007669"/>
    <property type="project" value="InterPro"/>
</dbReference>
<dbReference type="Gene3D" id="2.60.260.20">
    <property type="entry name" value="Urease metallochaperone UreE, N-terminal domain"/>
    <property type="match status" value="1"/>
</dbReference>
<dbReference type="Gene3D" id="3.30.70.790">
    <property type="entry name" value="UreE, C-terminal domain"/>
    <property type="match status" value="1"/>
</dbReference>
<dbReference type="HAMAP" id="MF_00822">
    <property type="entry name" value="UreE"/>
    <property type="match status" value="1"/>
</dbReference>
<dbReference type="InterPro" id="IPR012406">
    <property type="entry name" value="UreE"/>
</dbReference>
<dbReference type="InterPro" id="IPR007864">
    <property type="entry name" value="UreE_C_dom"/>
</dbReference>
<dbReference type="InterPro" id="IPR004029">
    <property type="entry name" value="UreE_N"/>
</dbReference>
<dbReference type="InterPro" id="IPR036118">
    <property type="entry name" value="UreE_N_sf"/>
</dbReference>
<dbReference type="NCBIfam" id="NF010711">
    <property type="entry name" value="PRK14113.1"/>
    <property type="match status" value="1"/>
</dbReference>
<dbReference type="Pfam" id="PF05194">
    <property type="entry name" value="UreE_C"/>
    <property type="match status" value="1"/>
</dbReference>
<dbReference type="Pfam" id="PF02814">
    <property type="entry name" value="UreE_N"/>
    <property type="match status" value="1"/>
</dbReference>
<dbReference type="PIRSF" id="PIRSF036402">
    <property type="entry name" value="Ureas_acces_UreE"/>
    <property type="match status" value="1"/>
</dbReference>
<dbReference type="SMART" id="SM00988">
    <property type="entry name" value="UreE_N"/>
    <property type="match status" value="1"/>
</dbReference>
<dbReference type="SUPFAM" id="SSF69737">
    <property type="entry name" value="Urease metallochaperone UreE, C-terminal domain"/>
    <property type="match status" value="1"/>
</dbReference>
<dbReference type="SUPFAM" id="SSF69287">
    <property type="entry name" value="Urease metallochaperone UreE, N-terminal domain"/>
    <property type="match status" value="1"/>
</dbReference>
<protein>
    <recommendedName>
        <fullName evidence="1">Urease accessory protein UreE</fullName>
    </recommendedName>
</protein>
<proteinExistence type="inferred from homology"/>
<keyword id="KW-0143">Chaperone</keyword>
<keyword id="KW-0963">Cytoplasm</keyword>
<keyword id="KW-0533">Nickel</keyword>
<keyword id="KW-0996">Nickel insertion</keyword>
<accession>A6VTV9</accession>
<sequence>MLDIYERLGTHCHDPVYTTVTLTHEQRDRGRLKLVGENNEEVRVFLERGKPLLVGEFLKSECGKIVQVAGAVEDVAHASCEDWEAFSKACYHLGNRHTKIQIGERWLRIKPDHVLEDMLHMLGLIVTHEEAVFVPESGAYSHGHSHH</sequence>
<comment type="function">
    <text evidence="1">Involved in urease metallocenter assembly. Binds nickel. Probably functions as a nickel donor during metallocenter assembly.</text>
</comment>
<comment type="subcellular location">
    <subcellularLocation>
        <location evidence="1">Cytoplasm</location>
    </subcellularLocation>
</comment>
<comment type="similarity">
    <text evidence="1">Belongs to the UreE family.</text>
</comment>
<name>UREE_MARMS</name>
<reference key="1">
    <citation type="submission" date="2007-06" db="EMBL/GenBank/DDBJ databases">
        <title>Complete sequence of Marinomonas sp. MWYL1.</title>
        <authorList>
            <consortium name="US DOE Joint Genome Institute"/>
            <person name="Copeland A."/>
            <person name="Lucas S."/>
            <person name="Lapidus A."/>
            <person name="Barry K."/>
            <person name="Glavina del Rio T."/>
            <person name="Dalin E."/>
            <person name="Tice H."/>
            <person name="Pitluck S."/>
            <person name="Kiss H."/>
            <person name="Brettin T."/>
            <person name="Bruce D."/>
            <person name="Detter J.C."/>
            <person name="Han C."/>
            <person name="Schmutz J."/>
            <person name="Larimer F."/>
            <person name="Land M."/>
            <person name="Hauser L."/>
            <person name="Kyrpides N."/>
            <person name="Kim E."/>
            <person name="Johnston A.W.B."/>
            <person name="Todd J.D."/>
            <person name="Rogers R."/>
            <person name="Wexler M."/>
            <person name="Bond P.L."/>
            <person name="Li Y."/>
            <person name="Richardson P."/>
        </authorList>
    </citation>
    <scope>NUCLEOTIDE SEQUENCE [LARGE SCALE GENOMIC DNA]</scope>
    <source>
        <strain>MWYL1</strain>
    </source>
</reference>